<gene>
    <name type="primary">Rxfp4</name>
    <name type="synonym">Gpr100</name>
    <name type="synonym">Rln3r2</name>
</gene>
<evidence type="ECO:0000250" key="1"/>
<evidence type="ECO:0000255" key="2"/>
<evidence type="ECO:0000255" key="3">
    <source>
        <dbReference type="PROSITE-ProRule" id="PRU00521"/>
    </source>
</evidence>
<evidence type="ECO:0000305" key="4"/>
<proteinExistence type="evidence at transcript level"/>
<keyword id="KW-1003">Cell membrane</keyword>
<keyword id="KW-1015">Disulfide bond</keyword>
<keyword id="KW-0297">G-protein coupled receptor</keyword>
<keyword id="KW-0325">Glycoprotein</keyword>
<keyword id="KW-0472">Membrane</keyword>
<keyword id="KW-0675">Receptor</keyword>
<keyword id="KW-1185">Reference proteome</keyword>
<keyword id="KW-0807">Transducer</keyword>
<keyword id="KW-0812">Transmembrane</keyword>
<keyword id="KW-1133">Transmembrane helix</keyword>
<feature type="chain" id="PRO_0000070107" description="Relaxin-3 receptor 2">
    <location>
        <begin position="1"/>
        <end position="414"/>
    </location>
</feature>
<feature type="topological domain" description="Extracellular" evidence="2">
    <location>
        <begin position="1"/>
        <end position="43"/>
    </location>
</feature>
<feature type="transmembrane region" description="Helical; Name=1" evidence="2">
    <location>
        <begin position="44"/>
        <end position="64"/>
    </location>
</feature>
<feature type="topological domain" description="Cytoplasmic" evidence="2">
    <location>
        <begin position="65"/>
        <end position="77"/>
    </location>
</feature>
<feature type="transmembrane region" description="Helical; Name=2" evidence="2">
    <location>
        <begin position="78"/>
        <end position="98"/>
    </location>
</feature>
<feature type="topological domain" description="Extracellular" evidence="2">
    <location>
        <begin position="99"/>
        <end position="116"/>
    </location>
</feature>
<feature type="transmembrane region" description="Helical; Name=3" evidence="2">
    <location>
        <begin position="117"/>
        <end position="137"/>
    </location>
</feature>
<feature type="topological domain" description="Cytoplasmic" evidence="2">
    <location>
        <begin position="138"/>
        <end position="155"/>
    </location>
</feature>
<feature type="transmembrane region" description="Helical; Name=4" evidence="2">
    <location>
        <begin position="156"/>
        <end position="176"/>
    </location>
</feature>
<feature type="topological domain" description="Extracellular" evidence="2">
    <location>
        <begin position="177"/>
        <end position="209"/>
    </location>
</feature>
<feature type="transmembrane region" description="Helical; Name=5" evidence="2">
    <location>
        <begin position="210"/>
        <end position="230"/>
    </location>
</feature>
<feature type="topological domain" description="Cytoplasmic" evidence="2">
    <location>
        <begin position="231"/>
        <end position="255"/>
    </location>
</feature>
<feature type="transmembrane region" description="Helical; Name=6" evidence="2">
    <location>
        <begin position="256"/>
        <end position="276"/>
    </location>
</feature>
<feature type="topological domain" description="Extracellular" evidence="2">
    <location>
        <begin position="277"/>
        <end position="293"/>
    </location>
</feature>
<feature type="transmembrane region" description="Helical; Name=7" evidence="2">
    <location>
        <begin position="294"/>
        <end position="316"/>
    </location>
</feature>
<feature type="topological domain" description="Cytoplasmic" evidence="2">
    <location>
        <begin position="317"/>
        <end position="414"/>
    </location>
</feature>
<feature type="glycosylation site" description="N-linked (GlcNAc...) asparagine" evidence="2">
    <location>
        <position position="5"/>
    </location>
</feature>
<feature type="glycosylation site" description="N-linked (GlcNAc...) asparagine" evidence="2">
    <location>
        <position position="17"/>
    </location>
</feature>
<feature type="disulfide bond" evidence="3">
    <location>
        <begin position="114"/>
        <end position="191"/>
    </location>
</feature>
<feature type="sequence conflict" description="In Ref. 2; AAO85051." evidence="4" ref="2">
    <original>M</original>
    <variation>L</variation>
    <location>
        <position position="41"/>
    </location>
</feature>
<organism>
    <name type="scientific">Mus musculus</name>
    <name type="common">Mouse</name>
    <dbReference type="NCBI Taxonomy" id="10090"/>
    <lineage>
        <taxon>Eukaryota</taxon>
        <taxon>Metazoa</taxon>
        <taxon>Chordata</taxon>
        <taxon>Craniata</taxon>
        <taxon>Vertebrata</taxon>
        <taxon>Euteleostomi</taxon>
        <taxon>Mammalia</taxon>
        <taxon>Eutheria</taxon>
        <taxon>Euarchontoglires</taxon>
        <taxon>Glires</taxon>
        <taxon>Rodentia</taxon>
        <taxon>Myomorpha</taxon>
        <taxon>Muroidea</taxon>
        <taxon>Muridae</taxon>
        <taxon>Murinae</taxon>
        <taxon>Mus</taxon>
        <taxon>Mus</taxon>
    </lineage>
</organism>
<dbReference type="EMBL" id="AY288422">
    <property type="protein sequence ID" value="AAP72131.1"/>
    <property type="molecule type" value="mRNA"/>
</dbReference>
<dbReference type="EMBL" id="AY255539">
    <property type="protein sequence ID" value="AAO85051.1"/>
    <property type="molecule type" value="mRNA"/>
</dbReference>
<dbReference type="CCDS" id="CCDS17482.1"/>
<dbReference type="RefSeq" id="NP_861538.1">
    <property type="nucleotide sequence ID" value="NM_181817.2"/>
</dbReference>
<dbReference type="SMR" id="Q7TQP4"/>
<dbReference type="FunCoup" id="Q7TQP4">
    <property type="interactions" value="438"/>
</dbReference>
<dbReference type="STRING" id="10090.ENSMUSP00000058732"/>
<dbReference type="GuidetoPHARMACOLOGY" id="354"/>
<dbReference type="GlyCosmos" id="Q7TQP4">
    <property type="glycosylation" value="2 sites, No reported glycans"/>
</dbReference>
<dbReference type="GlyGen" id="Q7TQP4">
    <property type="glycosylation" value="2 sites"/>
</dbReference>
<dbReference type="PhosphoSitePlus" id="Q7TQP4"/>
<dbReference type="PaxDb" id="10090-ENSMUSP00000058732"/>
<dbReference type="Antibodypedia" id="20424">
    <property type="antibodies" value="161 antibodies from 25 providers"/>
</dbReference>
<dbReference type="DNASU" id="242093"/>
<dbReference type="Ensembl" id="ENSMUST00000063119.5">
    <property type="protein sequence ID" value="ENSMUSP00000058732.5"/>
    <property type="gene ID" value="ENSMUSG00000049741.5"/>
</dbReference>
<dbReference type="GeneID" id="242093"/>
<dbReference type="KEGG" id="mmu:242093"/>
<dbReference type="UCSC" id="uc008pwc.1">
    <property type="organism name" value="mouse"/>
</dbReference>
<dbReference type="AGR" id="MGI:2182926"/>
<dbReference type="CTD" id="339403"/>
<dbReference type="MGI" id="MGI:2182926">
    <property type="gene designation" value="Rxfp4"/>
</dbReference>
<dbReference type="VEuPathDB" id="HostDB:ENSMUSG00000049741"/>
<dbReference type="eggNOG" id="KOG3656">
    <property type="taxonomic scope" value="Eukaryota"/>
</dbReference>
<dbReference type="GeneTree" id="ENSGT01130000278308"/>
<dbReference type="HOGENOM" id="CLU_009579_8_1_1"/>
<dbReference type="InParanoid" id="Q7TQP4"/>
<dbReference type="OMA" id="WVLGNCA"/>
<dbReference type="OrthoDB" id="9936726at2759"/>
<dbReference type="PhylomeDB" id="Q7TQP4"/>
<dbReference type="TreeFam" id="TF330024"/>
<dbReference type="Reactome" id="R-MMU-418594">
    <property type="pathway name" value="G alpha (i) signalling events"/>
</dbReference>
<dbReference type="Reactome" id="R-MMU-444821">
    <property type="pathway name" value="Relaxin receptors"/>
</dbReference>
<dbReference type="BioGRID-ORCS" id="242093">
    <property type="hits" value="3 hits in 78 CRISPR screens"/>
</dbReference>
<dbReference type="PRO" id="PR:Q7TQP4"/>
<dbReference type="Proteomes" id="UP000000589">
    <property type="component" value="Chromosome 3"/>
</dbReference>
<dbReference type="RNAct" id="Q7TQP4">
    <property type="molecule type" value="protein"/>
</dbReference>
<dbReference type="Bgee" id="ENSMUSG00000049741">
    <property type="expression patterns" value="Expressed in mesodermal cell in embryo"/>
</dbReference>
<dbReference type="ExpressionAtlas" id="Q7TQP4">
    <property type="expression patterns" value="baseline and differential"/>
</dbReference>
<dbReference type="GO" id="GO:0005886">
    <property type="term" value="C:plasma membrane"/>
    <property type="evidence" value="ECO:0007669"/>
    <property type="project" value="UniProtKB-SubCell"/>
</dbReference>
<dbReference type="GO" id="GO:0004930">
    <property type="term" value="F:G protein-coupled receptor activity"/>
    <property type="evidence" value="ECO:0007669"/>
    <property type="project" value="UniProtKB-KW"/>
</dbReference>
<dbReference type="GO" id="GO:2000253">
    <property type="term" value="P:positive regulation of feeding behavior"/>
    <property type="evidence" value="ECO:0000315"/>
    <property type="project" value="MGI"/>
</dbReference>
<dbReference type="FunFam" id="1.20.1070.10:FF:000273">
    <property type="entry name" value="Relaxin family peptide/INSL5 receptor 4"/>
    <property type="match status" value="1"/>
</dbReference>
<dbReference type="Gene3D" id="1.20.1070.10">
    <property type="entry name" value="Rhodopsin 7-helix transmembrane proteins"/>
    <property type="match status" value="1"/>
</dbReference>
<dbReference type="InterPro" id="IPR000248">
    <property type="entry name" value="ATII_rcpt"/>
</dbReference>
<dbReference type="InterPro" id="IPR050119">
    <property type="entry name" value="CCR1-9-like"/>
</dbReference>
<dbReference type="InterPro" id="IPR000276">
    <property type="entry name" value="GPCR_Rhodpsn"/>
</dbReference>
<dbReference type="InterPro" id="IPR017452">
    <property type="entry name" value="GPCR_Rhodpsn_7TM"/>
</dbReference>
<dbReference type="PANTHER" id="PTHR10489">
    <property type="entry name" value="CELL ADHESION MOLECULE"/>
    <property type="match status" value="1"/>
</dbReference>
<dbReference type="PANTHER" id="PTHR10489:SF951">
    <property type="entry name" value="RELAXIN FAMILY PEPTIDE_INSL5 RECEPTOR 4"/>
    <property type="match status" value="1"/>
</dbReference>
<dbReference type="Pfam" id="PF00001">
    <property type="entry name" value="7tm_1"/>
    <property type="match status" value="1"/>
</dbReference>
<dbReference type="PRINTS" id="PR00241">
    <property type="entry name" value="ANGIOTENSINR"/>
</dbReference>
<dbReference type="PRINTS" id="PR00237">
    <property type="entry name" value="GPCRRHODOPSN"/>
</dbReference>
<dbReference type="SUPFAM" id="SSF81321">
    <property type="entry name" value="Family A G protein-coupled receptor-like"/>
    <property type="match status" value="1"/>
</dbReference>
<dbReference type="PROSITE" id="PS50262">
    <property type="entry name" value="G_PROTEIN_RECEP_F1_2"/>
    <property type="match status" value="1"/>
</dbReference>
<name>RL3R2_MOUSE</name>
<sequence>MATSNSSASLPTLFWVNGSGDSVLSTDGAAMPVQFLVLRIMVALAYGLVGIIGLLGNLAVLWVLGNCGQRVPGLSSDTFVFSLALADLGLALTLPFWATESAMDFHWPFGSALCKVVLTTTVLSIYASTFLITALSIARYWVVAMAVGPGSHLSVFWARVVTLAVWVAAALVTVPTAIFGAEVELWGVCLCLLRFPSRYWLGAYQLQRVVLAFIVPLGVITTSYLLLLAFLERQQRCRPRQWQDSRVVARSVRVLVASFALCWVPNHVVTLWEILVRFDLVPWDSTFYTFHTYILPITTCLAHSNSCLNPVIYCLLRREPQQVLVSSFRALWSRLWPQRKACMEQMALKEVGGRTVASTQESGSSRTHTNTMEHLDEGCSLNTLLSETYQGQSPQILGRSSCSLSQAAVSPGEV</sequence>
<reference key="1">
    <citation type="journal article" date="2003" name="FEBS Lett.">
        <title>Seven evolutionarily conserved human rhodopsin G protein-coupled receptors lacking close relatives.</title>
        <authorList>
            <person name="Fredriksson R."/>
            <person name="Hoeglund P.J."/>
            <person name="Gloriam D.E.I."/>
            <person name="Lagerstroem M.C."/>
            <person name="Schioeth H.B."/>
        </authorList>
    </citation>
    <scope>NUCLEOTIDE SEQUENCE [MRNA]</scope>
</reference>
<reference key="2">
    <citation type="journal article" date="2003" name="Proc. Natl. Acad. Sci. U.S.A.">
        <title>The G protein-coupled receptor repertoires of human and mouse.</title>
        <authorList>
            <person name="Vassilatis D.K."/>
            <person name="Hohmann J.G."/>
            <person name="Zeng H."/>
            <person name="Li F."/>
            <person name="Ranchalis J.E."/>
            <person name="Mortrud M.T."/>
            <person name="Brown A."/>
            <person name="Rodriguez S.S."/>
            <person name="Weller J.R."/>
            <person name="Wright A.C."/>
            <person name="Bergmann J.E."/>
            <person name="Gaitanaris G.A."/>
        </authorList>
    </citation>
    <scope>NUCLEOTIDE SEQUENCE [LARGE SCALE MRNA] OF 41-159</scope>
</reference>
<comment type="function">
    <text evidence="1">High affinity receptor for INSL5. Also acts as a receptor for RLN3/relaxin-3, as well as bradykinin and kallidin. Binding of the ligand inhibit cAMP accumulation (By similarity).</text>
</comment>
<comment type="subcellular location">
    <subcellularLocation>
        <location>Cell membrane</location>
        <topology>Multi-pass membrane protein</topology>
    </subcellularLocation>
</comment>
<comment type="tissue specificity">
    <text>Detected only in bone marrow.</text>
</comment>
<comment type="similarity">
    <text evidence="3">Belongs to the G-protein coupled receptor 1 family.</text>
</comment>
<accession>Q7TQP4</accession>
<accession>Q80UD6</accession>
<protein>
    <recommendedName>
        <fullName>Relaxin-3 receptor 2</fullName>
        <shortName>RLN3 receptor 2</shortName>
    </recommendedName>
    <alternativeName>
        <fullName>G-protein coupled receptor 100</fullName>
    </alternativeName>
    <alternativeName>
        <fullName>Insulin-like peptide INSL5 receptor</fullName>
    </alternativeName>
    <alternativeName>
        <fullName>Relaxin family peptide receptor 4</fullName>
    </alternativeName>
</protein>